<evidence type="ECO:0000255" key="1"/>
<evidence type="ECO:0000256" key="2">
    <source>
        <dbReference type="SAM" id="MobiDB-lite"/>
    </source>
</evidence>
<evidence type="ECO:0000305" key="3"/>
<organism>
    <name type="scientific">Dictyostelium discoideum</name>
    <name type="common">Social amoeba</name>
    <dbReference type="NCBI Taxonomy" id="44689"/>
    <lineage>
        <taxon>Eukaryota</taxon>
        <taxon>Amoebozoa</taxon>
        <taxon>Evosea</taxon>
        <taxon>Eumycetozoa</taxon>
        <taxon>Dictyostelia</taxon>
        <taxon>Dictyosteliales</taxon>
        <taxon>Dictyosteliaceae</taxon>
        <taxon>Dictyostelium</taxon>
    </lineage>
</organism>
<sequence length="440" mass="50663">MFIILKFLISFFLICNFFNYNDHFASGQTLPPGFCPSPLIYRNSTNRQNDIENGYLFIGQTNCTSPCPSLIFSENEWHRVYNMSLIAGTISMFALIFLIITYSPLVNKYNGYTRHTVGILFLFCGIFLTVTTDGRQLWDIDLGFEKYCPEPGRFARQSDTKCLVTAIFFQYGCVTSILWWAAISVDLWMTIRKVKISKLQFITYAVILNIITLILTFAPIASKQYGYGEAAIGCWLMDLKYQVGYFWAPVGFCLCVGCVSIVLIIREIYKVSDAIKKKLLAKHLKPLMLIILMLSEFIYMFIFYSYTTSRRGHYHDVVEKYIRCLFINASNPSICEVDVSISSPAHFFFHFCMRLMGIEGLIFFGFTRQTKRIWLRSFWLNNSFIKKLIPSLSSISSDEKTSNSSHRTTRGCRETEFGESIEQSNDPEHFIELSGVDSKN</sequence>
<protein>
    <recommendedName>
        <fullName>Frizzled/smoothened-like sans CRD protein D</fullName>
    </recommendedName>
</protein>
<dbReference type="EMBL" id="AAFI02000008">
    <property type="protein sequence ID" value="EAL71272.1"/>
    <property type="molecule type" value="Genomic_DNA"/>
</dbReference>
<dbReference type="RefSeq" id="XP_645308.1">
    <property type="nucleotide sequence ID" value="XM_640216.1"/>
</dbReference>
<dbReference type="SMR" id="Q75JP9"/>
<dbReference type="FunCoup" id="Q75JP9">
    <property type="interactions" value="19"/>
</dbReference>
<dbReference type="GlyCosmos" id="Q75JP9">
    <property type="glycosylation" value="4 sites, No reported glycans"/>
</dbReference>
<dbReference type="GlyGen" id="Q75JP9">
    <property type="glycosylation" value="4 sites"/>
</dbReference>
<dbReference type="PaxDb" id="44689-DDB0232058"/>
<dbReference type="EnsemblProtists" id="EAL71272">
    <property type="protein sequence ID" value="EAL71272"/>
    <property type="gene ID" value="DDB_G0272240"/>
</dbReference>
<dbReference type="GeneID" id="8618474"/>
<dbReference type="KEGG" id="ddi:DDB_G0272240"/>
<dbReference type="dictyBase" id="DDB_G0272240">
    <property type="gene designation" value="fscD"/>
</dbReference>
<dbReference type="VEuPathDB" id="AmoebaDB:DDB_G0272240"/>
<dbReference type="HOGENOM" id="CLU_036764_0_0_1"/>
<dbReference type="InParanoid" id="Q75JP9"/>
<dbReference type="OMA" id="FSENEWH"/>
<dbReference type="PhylomeDB" id="Q75JP9"/>
<dbReference type="PRO" id="PR:Q75JP9"/>
<dbReference type="Proteomes" id="UP000002195">
    <property type="component" value="Chromosome 2"/>
</dbReference>
<dbReference type="GO" id="GO:0016020">
    <property type="term" value="C:membrane"/>
    <property type="evidence" value="ECO:0007669"/>
    <property type="project" value="UniProtKB-SubCell"/>
</dbReference>
<dbReference type="GO" id="GO:0004888">
    <property type="term" value="F:transmembrane signaling receptor activity"/>
    <property type="evidence" value="ECO:0007669"/>
    <property type="project" value="InterPro"/>
</dbReference>
<dbReference type="GO" id="GO:0007166">
    <property type="term" value="P:cell surface receptor signaling pathway"/>
    <property type="evidence" value="ECO:0007669"/>
    <property type="project" value="InterPro"/>
</dbReference>
<dbReference type="Gene3D" id="1.20.1070.10">
    <property type="entry name" value="Rhodopsin 7-helix transmembrane proteins"/>
    <property type="match status" value="1"/>
</dbReference>
<dbReference type="InterPro" id="IPR017981">
    <property type="entry name" value="GPCR_2-like_7TM"/>
</dbReference>
<dbReference type="InterPro" id="IPR050949">
    <property type="entry name" value="GPCR_Fz/Smo-like"/>
</dbReference>
<dbReference type="PANTHER" id="PTHR31787:SF8">
    <property type="entry name" value="FRIZZLED_SMOOTHENED-LIKE SANS CRD PROTEIN B-RELATED"/>
    <property type="match status" value="1"/>
</dbReference>
<dbReference type="PANTHER" id="PTHR31787">
    <property type="entry name" value="G-PROTEIN-COUPLED RECEPTOR GPCR FAMILY PROTEIN"/>
    <property type="match status" value="1"/>
</dbReference>
<dbReference type="PROSITE" id="PS50261">
    <property type="entry name" value="G_PROTEIN_RECEP_F2_4"/>
    <property type="match status" value="1"/>
</dbReference>
<name>FSCD_DICDI</name>
<proteinExistence type="inferred from homology"/>
<gene>
    <name type="primary">fscD</name>
    <name type="ORF">DDB_G0272240</name>
</gene>
<keyword id="KW-0325">Glycoprotein</keyword>
<keyword id="KW-0472">Membrane</keyword>
<keyword id="KW-0675">Receptor</keyword>
<keyword id="KW-1185">Reference proteome</keyword>
<keyword id="KW-0732">Signal</keyword>
<keyword id="KW-0812">Transmembrane</keyword>
<keyword id="KW-1133">Transmembrane helix</keyword>
<comment type="subcellular location">
    <subcellularLocation>
        <location evidence="3">Membrane</location>
        <topology evidence="3">Multi-pass membrane protein</topology>
    </subcellularLocation>
</comment>
<comment type="similarity">
    <text evidence="3">Belongs to the G-protein coupled receptor Fz/Smo family.</text>
</comment>
<reference key="1">
    <citation type="journal article" date="2002" name="Nature">
        <title>Sequence and analysis of chromosome 2 of Dictyostelium discoideum.</title>
        <authorList>
            <person name="Gloeckner G."/>
            <person name="Eichinger L."/>
            <person name="Szafranski K."/>
            <person name="Pachebat J.A."/>
            <person name="Bankier A.T."/>
            <person name="Dear P.H."/>
            <person name="Lehmann R."/>
            <person name="Baumgart C."/>
            <person name="Parra G."/>
            <person name="Abril J.F."/>
            <person name="Guigo R."/>
            <person name="Kumpf K."/>
            <person name="Tunggal B."/>
            <person name="Cox E.C."/>
            <person name="Quail M.A."/>
            <person name="Platzer M."/>
            <person name="Rosenthal A."/>
            <person name="Noegel A.A."/>
        </authorList>
    </citation>
    <scope>NUCLEOTIDE SEQUENCE [LARGE SCALE GENOMIC DNA]</scope>
    <source>
        <strain>AX4</strain>
    </source>
</reference>
<reference key="2">
    <citation type="journal article" date="2005" name="Nature">
        <title>The genome of the social amoeba Dictyostelium discoideum.</title>
        <authorList>
            <person name="Eichinger L."/>
            <person name="Pachebat J.A."/>
            <person name="Gloeckner G."/>
            <person name="Rajandream M.A."/>
            <person name="Sucgang R."/>
            <person name="Berriman M."/>
            <person name="Song J."/>
            <person name="Olsen R."/>
            <person name="Szafranski K."/>
            <person name="Xu Q."/>
            <person name="Tunggal B."/>
            <person name="Kummerfeld S."/>
            <person name="Madera M."/>
            <person name="Konfortov B.A."/>
            <person name="Rivero F."/>
            <person name="Bankier A.T."/>
            <person name="Lehmann R."/>
            <person name="Hamlin N."/>
            <person name="Davies R."/>
            <person name="Gaudet P."/>
            <person name="Fey P."/>
            <person name="Pilcher K."/>
            <person name="Chen G."/>
            <person name="Saunders D."/>
            <person name="Sodergren E.J."/>
            <person name="Davis P."/>
            <person name="Kerhornou A."/>
            <person name="Nie X."/>
            <person name="Hall N."/>
            <person name="Anjard C."/>
            <person name="Hemphill L."/>
            <person name="Bason N."/>
            <person name="Farbrother P."/>
            <person name="Desany B."/>
            <person name="Just E."/>
            <person name="Morio T."/>
            <person name="Rost R."/>
            <person name="Churcher C.M."/>
            <person name="Cooper J."/>
            <person name="Haydock S."/>
            <person name="van Driessche N."/>
            <person name="Cronin A."/>
            <person name="Goodhead I."/>
            <person name="Muzny D.M."/>
            <person name="Mourier T."/>
            <person name="Pain A."/>
            <person name="Lu M."/>
            <person name="Harper D."/>
            <person name="Lindsay R."/>
            <person name="Hauser H."/>
            <person name="James K.D."/>
            <person name="Quiles M."/>
            <person name="Madan Babu M."/>
            <person name="Saito T."/>
            <person name="Buchrieser C."/>
            <person name="Wardroper A."/>
            <person name="Felder M."/>
            <person name="Thangavelu M."/>
            <person name="Johnson D."/>
            <person name="Knights A."/>
            <person name="Loulseged H."/>
            <person name="Mungall K.L."/>
            <person name="Oliver K."/>
            <person name="Price C."/>
            <person name="Quail M.A."/>
            <person name="Urushihara H."/>
            <person name="Hernandez J."/>
            <person name="Rabbinowitsch E."/>
            <person name="Steffen D."/>
            <person name="Sanders M."/>
            <person name="Ma J."/>
            <person name="Kohara Y."/>
            <person name="Sharp S."/>
            <person name="Simmonds M.N."/>
            <person name="Spiegler S."/>
            <person name="Tivey A."/>
            <person name="Sugano S."/>
            <person name="White B."/>
            <person name="Walker D."/>
            <person name="Woodward J.R."/>
            <person name="Winckler T."/>
            <person name="Tanaka Y."/>
            <person name="Shaulsky G."/>
            <person name="Schleicher M."/>
            <person name="Weinstock G.M."/>
            <person name="Rosenthal A."/>
            <person name="Cox E.C."/>
            <person name="Chisholm R.L."/>
            <person name="Gibbs R.A."/>
            <person name="Loomis W.F."/>
            <person name="Platzer M."/>
            <person name="Kay R.R."/>
            <person name="Williams J.G."/>
            <person name="Dear P.H."/>
            <person name="Noegel A.A."/>
            <person name="Barrell B.G."/>
            <person name="Kuspa A."/>
        </authorList>
    </citation>
    <scope>NUCLEOTIDE SEQUENCE [LARGE SCALE GENOMIC DNA]</scope>
    <source>
        <strain>AX4</strain>
    </source>
</reference>
<reference key="3">
    <citation type="journal article" date="2006" name="Eur. J. Cell Biol.">
        <title>The Dictyostelium repertoire of seven transmembrane domain receptors.</title>
        <authorList>
            <person name="Prabhu Y."/>
            <person name="Eichinger L."/>
        </authorList>
    </citation>
    <scope>NOMENCLATURE</scope>
</reference>
<accession>Q75JP9</accession>
<accession>Q559M6</accession>
<feature type="signal peptide" evidence="1">
    <location>
        <begin position="1"/>
        <end position="27"/>
    </location>
</feature>
<feature type="chain" id="PRO_0000371357" description="Frizzled/smoothened-like sans CRD protein D">
    <location>
        <begin position="28"/>
        <end position="440"/>
    </location>
</feature>
<feature type="topological domain" description="Extracellular" evidence="1">
    <location>
        <begin position="28"/>
        <end position="85"/>
    </location>
</feature>
<feature type="transmembrane region" description="Helical; Name=1" evidence="1">
    <location>
        <begin position="86"/>
        <end position="106"/>
    </location>
</feature>
<feature type="topological domain" description="Cytoplasmic" evidence="1">
    <location>
        <begin position="107"/>
        <end position="110"/>
    </location>
</feature>
<feature type="transmembrane region" description="Helical; Name=2" evidence="1">
    <location>
        <begin position="111"/>
        <end position="131"/>
    </location>
</feature>
<feature type="topological domain" description="Extracellular" evidence="1">
    <location>
        <begin position="132"/>
        <end position="162"/>
    </location>
</feature>
<feature type="transmembrane region" description="Helical; Name=3" evidence="1">
    <location>
        <begin position="163"/>
        <end position="183"/>
    </location>
</feature>
<feature type="topological domain" description="Cytoplasmic" evidence="1">
    <location>
        <begin position="184"/>
        <end position="200"/>
    </location>
</feature>
<feature type="transmembrane region" description="Helical; Name=4" evidence="1">
    <location>
        <begin position="201"/>
        <end position="221"/>
    </location>
</feature>
<feature type="topological domain" description="Extracellular" evidence="1">
    <location>
        <begin position="222"/>
        <end position="244"/>
    </location>
</feature>
<feature type="transmembrane region" description="Helical; Name=5" evidence="1">
    <location>
        <begin position="245"/>
        <end position="265"/>
    </location>
</feature>
<feature type="topological domain" description="Cytoplasmic" evidence="1">
    <location>
        <begin position="266"/>
        <end position="285"/>
    </location>
</feature>
<feature type="transmembrane region" description="Helical; Name=6" evidence="1">
    <location>
        <begin position="286"/>
        <end position="306"/>
    </location>
</feature>
<feature type="topological domain" description="Extracellular" evidence="1">
    <location>
        <begin position="307"/>
        <end position="346"/>
    </location>
</feature>
<feature type="transmembrane region" description="Helical; Name=7" evidence="1">
    <location>
        <begin position="347"/>
        <end position="367"/>
    </location>
</feature>
<feature type="topological domain" description="Cytoplasmic" evidence="1">
    <location>
        <begin position="368"/>
        <end position="440"/>
    </location>
</feature>
<feature type="region of interest" description="Disordered" evidence="2">
    <location>
        <begin position="395"/>
        <end position="428"/>
    </location>
</feature>
<feature type="glycosylation site" description="N-linked (GlcNAc...) asparagine" evidence="1">
    <location>
        <position position="43"/>
    </location>
</feature>
<feature type="glycosylation site" description="N-linked (GlcNAc...) asparagine" evidence="1">
    <location>
        <position position="62"/>
    </location>
</feature>
<feature type="glycosylation site" description="N-linked (GlcNAc...) asparagine" evidence="1">
    <location>
        <position position="82"/>
    </location>
</feature>
<feature type="glycosylation site" description="N-linked (GlcNAc...) asparagine" evidence="1">
    <location>
        <position position="328"/>
    </location>
</feature>